<sequence>MKLPIYLDYAATTPVDPRVAEKMFQCMTMDGIFGNPASRSHRYGWQAEEAVDIARNQIAELINADHREIVFTSGATESNNLAIKGVAHFYHKKGKHIITSKTEHKAVLDTCRQLEREGFEVTYLEPAANGIIPMERLEAAMRDDTILVSIMHVNNEIGVIHDIDAIGELCRSKGIIFHMDAAQSAGKVPIDVQATKVDLISISGHKMYGPKGIGALYVRRKPRIRLEAQMHGGGHERGMRSGTLPTHQIVGLGEAAAIAKAEMASDDARIGALRDKLWNGIKHIEETYINGDAIERVSGSLNVSFNYVEGESLMMALKDLAVSSGSACTSASLEPSYVLRALGLNDEMAHSSIRFSIGRFTTEEEIDHAIEVITQSIDKLREMSPLWEMFKDGIDLNQVQWAHH</sequence>
<name>ISCS_SHEB8</name>
<keyword id="KW-0001">2Fe-2S</keyword>
<keyword id="KW-0963">Cytoplasm</keyword>
<keyword id="KW-0408">Iron</keyword>
<keyword id="KW-0411">Iron-sulfur</keyword>
<keyword id="KW-0479">Metal-binding</keyword>
<keyword id="KW-0663">Pyridoxal phosphate</keyword>
<keyword id="KW-0808">Transferase</keyword>
<gene>
    <name evidence="1" type="primary">iscS</name>
    <name type="ordered locus">Shew185_2386</name>
</gene>
<accession>A6WNY5</accession>
<reference key="1">
    <citation type="submission" date="2007-07" db="EMBL/GenBank/DDBJ databases">
        <title>Complete sequence of chromosome of Shewanella baltica OS185.</title>
        <authorList>
            <consortium name="US DOE Joint Genome Institute"/>
            <person name="Copeland A."/>
            <person name="Lucas S."/>
            <person name="Lapidus A."/>
            <person name="Barry K."/>
            <person name="Glavina del Rio T."/>
            <person name="Dalin E."/>
            <person name="Tice H."/>
            <person name="Pitluck S."/>
            <person name="Sims D."/>
            <person name="Brettin T."/>
            <person name="Bruce D."/>
            <person name="Detter J.C."/>
            <person name="Han C."/>
            <person name="Schmutz J."/>
            <person name="Larimer F."/>
            <person name="Land M."/>
            <person name="Hauser L."/>
            <person name="Kyrpides N."/>
            <person name="Mikhailova N."/>
            <person name="Brettar I."/>
            <person name="Rodrigues J."/>
            <person name="Konstantinidis K."/>
            <person name="Tiedje J."/>
            <person name="Richardson P."/>
        </authorList>
    </citation>
    <scope>NUCLEOTIDE SEQUENCE [LARGE SCALE GENOMIC DNA]</scope>
    <source>
        <strain>OS185</strain>
    </source>
</reference>
<evidence type="ECO:0000255" key="1">
    <source>
        <dbReference type="HAMAP-Rule" id="MF_00331"/>
    </source>
</evidence>
<proteinExistence type="inferred from homology"/>
<dbReference type="EC" id="2.8.1.7" evidence="1"/>
<dbReference type="EMBL" id="CP000753">
    <property type="protein sequence ID" value="ABS08524.1"/>
    <property type="molecule type" value="Genomic_DNA"/>
</dbReference>
<dbReference type="RefSeq" id="WP_006081857.1">
    <property type="nucleotide sequence ID" value="NC_009665.1"/>
</dbReference>
<dbReference type="SMR" id="A6WNY5"/>
<dbReference type="KEGG" id="sbm:Shew185_2386"/>
<dbReference type="HOGENOM" id="CLU_003433_0_2_6"/>
<dbReference type="UniPathway" id="UPA00266"/>
<dbReference type="GO" id="GO:1990221">
    <property type="term" value="C:L-cysteine desulfurase complex"/>
    <property type="evidence" value="ECO:0007669"/>
    <property type="project" value="UniProtKB-ARBA"/>
</dbReference>
<dbReference type="GO" id="GO:0051537">
    <property type="term" value="F:2 iron, 2 sulfur cluster binding"/>
    <property type="evidence" value="ECO:0007669"/>
    <property type="project" value="UniProtKB-UniRule"/>
</dbReference>
<dbReference type="GO" id="GO:0031071">
    <property type="term" value="F:cysteine desulfurase activity"/>
    <property type="evidence" value="ECO:0007669"/>
    <property type="project" value="UniProtKB-UniRule"/>
</dbReference>
<dbReference type="GO" id="GO:0046872">
    <property type="term" value="F:metal ion binding"/>
    <property type="evidence" value="ECO:0007669"/>
    <property type="project" value="UniProtKB-KW"/>
</dbReference>
<dbReference type="GO" id="GO:0030170">
    <property type="term" value="F:pyridoxal phosphate binding"/>
    <property type="evidence" value="ECO:0007669"/>
    <property type="project" value="UniProtKB-UniRule"/>
</dbReference>
<dbReference type="GO" id="GO:0044571">
    <property type="term" value="P:[2Fe-2S] cluster assembly"/>
    <property type="evidence" value="ECO:0007669"/>
    <property type="project" value="UniProtKB-UniRule"/>
</dbReference>
<dbReference type="FunFam" id="3.40.640.10:FF:000003">
    <property type="entry name" value="Cysteine desulfurase IscS"/>
    <property type="match status" value="1"/>
</dbReference>
<dbReference type="FunFam" id="3.90.1150.10:FF:000002">
    <property type="entry name" value="Cysteine desulfurase IscS"/>
    <property type="match status" value="1"/>
</dbReference>
<dbReference type="Gene3D" id="3.90.1150.10">
    <property type="entry name" value="Aspartate Aminotransferase, domain 1"/>
    <property type="match status" value="1"/>
</dbReference>
<dbReference type="Gene3D" id="3.40.640.10">
    <property type="entry name" value="Type I PLP-dependent aspartate aminotransferase-like (Major domain)"/>
    <property type="match status" value="1"/>
</dbReference>
<dbReference type="HAMAP" id="MF_00331">
    <property type="entry name" value="Cys_desulf_IscS"/>
    <property type="match status" value="1"/>
</dbReference>
<dbReference type="InterPro" id="IPR000192">
    <property type="entry name" value="Aminotrans_V_dom"/>
</dbReference>
<dbReference type="InterPro" id="IPR020578">
    <property type="entry name" value="Aminotrans_V_PyrdxlP_BS"/>
</dbReference>
<dbReference type="InterPro" id="IPR010240">
    <property type="entry name" value="Cys_deSase_IscS"/>
</dbReference>
<dbReference type="InterPro" id="IPR016454">
    <property type="entry name" value="Cysteine_dSase"/>
</dbReference>
<dbReference type="InterPro" id="IPR015424">
    <property type="entry name" value="PyrdxlP-dep_Trfase"/>
</dbReference>
<dbReference type="InterPro" id="IPR015421">
    <property type="entry name" value="PyrdxlP-dep_Trfase_major"/>
</dbReference>
<dbReference type="InterPro" id="IPR015422">
    <property type="entry name" value="PyrdxlP-dep_Trfase_small"/>
</dbReference>
<dbReference type="NCBIfam" id="TIGR02006">
    <property type="entry name" value="IscS"/>
    <property type="match status" value="1"/>
</dbReference>
<dbReference type="NCBIfam" id="NF002806">
    <property type="entry name" value="PRK02948.1"/>
    <property type="match status" value="1"/>
</dbReference>
<dbReference type="NCBIfam" id="NF010611">
    <property type="entry name" value="PRK14012.1"/>
    <property type="match status" value="1"/>
</dbReference>
<dbReference type="PANTHER" id="PTHR11601:SF34">
    <property type="entry name" value="CYSTEINE DESULFURASE"/>
    <property type="match status" value="1"/>
</dbReference>
<dbReference type="PANTHER" id="PTHR11601">
    <property type="entry name" value="CYSTEINE DESULFURYLASE FAMILY MEMBER"/>
    <property type="match status" value="1"/>
</dbReference>
<dbReference type="Pfam" id="PF00266">
    <property type="entry name" value="Aminotran_5"/>
    <property type="match status" value="1"/>
</dbReference>
<dbReference type="PIRSF" id="PIRSF005572">
    <property type="entry name" value="NifS"/>
    <property type="match status" value="1"/>
</dbReference>
<dbReference type="SUPFAM" id="SSF53383">
    <property type="entry name" value="PLP-dependent transferases"/>
    <property type="match status" value="1"/>
</dbReference>
<dbReference type="PROSITE" id="PS00595">
    <property type="entry name" value="AA_TRANSFER_CLASS_5"/>
    <property type="match status" value="1"/>
</dbReference>
<organism>
    <name type="scientific">Shewanella baltica (strain OS185)</name>
    <dbReference type="NCBI Taxonomy" id="402882"/>
    <lineage>
        <taxon>Bacteria</taxon>
        <taxon>Pseudomonadati</taxon>
        <taxon>Pseudomonadota</taxon>
        <taxon>Gammaproteobacteria</taxon>
        <taxon>Alteromonadales</taxon>
        <taxon>Shewanellaceae</taxon>
        <taxon>Shewanella</taxon>
    </lineage>
</organism>
<feature type="chain" id="PRO_1000019442" description="Cysteine desulfurase IscS">
    <location>
        <begin position="1"/>
        <end position="404"/>
    </location>
</feature>
<feature type="active site" description="Cysteine persulfide intermediate" evidence="1">
    <location>
        <position position="328"/>
    </location>
</feature>
<feature type="binding site" evidence="1">
    <location>
        <begin position="75"/>
        <end position="76"/>
    </location>
    <ligand>
        <name>pyridoxal 5'-phosphate</name>
        <dbReference type="ChEBI" id="CHEBI:597326"/>
    </ligand>
</feature>
<feature type="binding site" evidence="1">
    <location>
        <position position="155"/>
    </location>
    <ligand>
        <name>pyridoxal 5'-phosphate</name>
        <dbReference type="ChEBI" id="CHEBI:597326"/>
    </ligand>
</feature>
<feature type="binding site" evidence="1">
    <location>
        <position position="183"/>
    </location>
    <ligand>
        <name>pyridoxal 5'-phosphate</name>
        <dbReference type="ChEBI" id="CHEBI:597326"/>
    </ligand>
</feature>
<feature type="binding site" evidence="1">
    <location>
        <begin position="203"/>
        <end position="205"/>
    </location>
    <ligand>
        <name>pyridoxal 5'-phosphate</name>
        <dbReference type="ChEBI" id="CHEBI:597326"/>
    </ligand>
</feature>
<feature type="binding site" evidence="1">
    <location>
        <position position="243"/>
    </location>
    <ligand>
        <name>pyridoxal 5'-phosphate</name>
        <dbReference type="ChEBI" id="CHEBI:597326"/>
    </ligand>
</feature>
<feature type="binding site" description="via persulfide group" evidence="1">
    <location>
        <position position="328"/>
    </location>
    <ligand>
        <name>[2Fe-2S] cluster</name>
        <dbReference type="ChEBI" id="CHEBI:190135"/>
        <note>ligand shared with IscU</note>
    </ligand>
</feature>
<feature type="modified residue" description="N6-(pyridoxal phosphate)lysine" evidence="1">
    <location>
        <position position="206"/>
    </location>
</feature>
<protein>
    <recommendedName>
        <fullName evidence="1">Cysteine desulfurase IscS</fullName>
        <ecNumber evidence="1">2.8.1.7</ecNumber>
    </recommendedName>
</protein>
<comment type="function">
    <text evidence="1">Master enzyme that delivers sulfur to a number of partners involved in Fe-S cluster assembly, tRNA modification or cofactor biosynthesis. Catalyzes the removal of elemental sulfur atoms from cysteine to produce alanine. Functions as a sulfur delivery protein for Fe-S cluster synthesis onto IscU, an Fe-S scaffold assembly protein, as well as other S acceptor proteins.</text>
</comment>
<comment type="catalytic activity">
    <reaction evidence="1">
        <text>(sulfur carrier)-H + L-cysteine = (sulfur carrier)-SH + L-alanine</text>
        <dbReference type="Rhea" id="RHEA:43892"/>
        <dbReference type="Rhea" id="RHEA-COMP:14737"/>
        <dbReference type="Rhea" id="RHEA-COMP:14739"/>
        <dbReference type="ChEBI" id="CHEBI:29917"/>
        <dbReference type="ChEBI" id="CHEBI:35235"/>
        <dbReference type="ChEBI" id="CHEBI:57972"/>
        <dbReference type="ChEBI" id="CHEBI:64428"/>
        <dbReference type="EC" id="2.8.1.7"/>
    </reaction>
</comment>
<comment type="cofactor">
    <cofactor evidence="1">
        <name>pyridoxal 5'-phosphate</name>
        <dbReference type="ChEBI" id="CHEBI:597326"/>
    </cofactor>
</comment>
<comment type="pathway">
    <text evidence="1">Cofactor biosynthesis; iron-sulfur cluster biosynthesis.</text>
</comment>
<comment type="subunit">
    <text evidence="1">Homodimer. Forms a heterotetramer with IscU, interacts with other sulfur acceptors.</text>
</comment>
<comment type="subcellular location">
    <subcellularLocation>
        <location evidence="1">Cytoplasm</location>
    </subcellularLocation>
</comment>
<comment type="similarity">
    <text evidence="1">Belongs to the class-V pyridoxal-phosphate-dependent aminotransferase family. NifS/IscS subfamily.</text>
</comment>